<organism>
    <name type="scientific">Verminephrobacter eiseniae (strain EF01-2)</name>
    <dbReference type="NCBI Taxonomy" id="391735"/>
    <lineage>
        <taxon>Bacteria</taxon>
        <taxon>Pseudomonadati</taxon>
        <taxon>Pseudomonadota</taxon>
        <taxon>Betaproteobacteria</taxon>
        <taxon>Burkholderiales</taxon>
        <taxon>Comamonadaceae</taxon>
        <taxon>Verminephrobacter</taxon>
    </lineage>
</organism>
<keyword id="KW-0456">Lyase</keyword>
<keyword id="KW-0460">Magnesium</keyword>
<keyword id="KW-0479">Metal-binding</keyword>
<keyword id="KW-1185">Reference proteome</keyword>
<gene>
    <name evidence="2" type="primary">dgoD</name>
    <name type="ordered locus">Veis_3772</name>
</gene>
<protein>
    <recommendedName>
        <fullName evidence="2">D-galactonate dehydratase</fullName>
        <shortName evidence="2">GalD</shortName>
        <ecNumber evidence="2">4.2.1.6</ecNumber>
    </recommendedName>
</protein>
<evidence type="ECO:0000250" key="1"/>
<evidence type="ECO:0000255" key="2">
    <source>
        <dbReference type="HAMAP-Rule" id="MF_01289"/>
    </source>
</evidence>
<reference key="1">
    <citation type="submission" date="2006-12" db="EMBL/GenBank/DDBJ databases">
        <title>Complete sequence of chromosome 1 of Verminephrobacter eiseniae EF01-2.</title>
        <authorList>
            <person name="Copeland A."/>
            <person name="Lucas S."/>
            <person name="Lapidus A."/>
            <person name="Barry K."/>
            <person name="Detter J.C."/>
            <person name="Glavina del Rio T."/>
            <person name="Dalin E."/>
            <person name="Tice H."/>
            <person name="Pitluck S."/>
            <person name="Chertkov O."/>
            <person name="Brettin T."/>
            <person name="Bruce D."/>
            <person name="Han C."/>
            <person name="Tapia R."/>
            <person name="Gilna P."/>
            <person name="Schmutz J."/>
            <person name="Larimer F."/>
            <person name="Land M."/>
            <person name="Hauser L."/>
            <person name="Kyrpides N."/>
            <person name="Kim E."/>
            <person name="Stahl D."/>
            <person name="Richardson P."/>
        </authorList>
    </citation>
    <scope>NUCLEOTIDE SEQUENCE [LARGE SCALE GENOMIC DNA]</scope>
    <source>
        <strain>EF01-2</strain>
    </source>
</reference>
<comment type="function">
    <text evidence="2">Catalyzes the dehydration of D-galactonate to 2-keto-3-deoxy-D-galactonate.</text>
</comment>
<comment type="catalytic activity">
    <reaction evidence="2">
        <text>D-galactonate = 2-dehydro-3-deoxy-D-galactonate + H2O</text>
        <dbReference type="Rhea" id="RHEA:18649"/>
        <dbReference type="ChEBI" id="CHEBI:12931"/>
        <dbReference type="ChEBI" id="CHEBI:15377"/>
        <dbReference type="ChEBI" id="CHEBI:57989"/>
        <dbReference type="EC" id="4.2.1.6"/>
    </reaction>
</comment>
<comment type="cofactor">
    <cofactor evidence="2">
        <name>Mg(2+)</name>
        <dbReference type="ChEBI" id="CHEBI:18420"/>
    </cofactor>
    <text evidence="2">Binds 1 Mg(2+) ion per subunit.</text>
</comment>
<comment type="pathway">
    <text evidence="2">Carbohydrate acid metabolism; D-galactonate degradation; D-glyceraldehyde 3-phosphate and pyruvate from D-galactonate: step 1/3.</text>
</comment>
<comment type="miscellaneous">
    <text evidence="2">Reaction proceeds via an anti dehydration.</text>
</comment>
<comment type="similarity">
    <text evidence="2">Belongs to the mandelate racemase/muconate lactonizing enzyme family. GalD subfamily.</text>
</comment>
<accession>A1WPC7</accession>
<sequence length="382" mass="42164">MKITQLTTYRVPPRWMFLRIETDEGLIGWGEPVVEGHARAVQAAVHELEPYLIGQDPARINDLWQVMYRAGFYRGGAVFMSAIAGVDQALWDIKGKALGVPVYQLLGGLVRDRMRTYGWVGGDRPADVIDGIRQRVDAGFTHFKLNGCEELGIIDSSRAVDAAVARVAQIRAAFGNTVEFGLDFHGRVSVAMAAVLIKELEYLRPLFIEEPVLAEQAEHYPKLAAKTHLPLAAGERMYSRFEFKRVLAAGGIAILQPDLSHAGGISECLKIAAMAEAHDVAIAPHCPLGPIALASCLHVDYVSWNATLQEQGMGMHYNRGGEVLDYVLNPQDFRLDNGFIAPFTKPGLGVEINEALVLERSRDCPDWRNPVWRHADGSVAEW</sequence>
<proteinExistence type="inferred from homology"/>
<dbReference type="EC" id="4.2.1.6" evidence="2"/>
<dbReference type="EMBL" id="CP000542">
    <property type="protein sequence ID" value="ABM59484.1"/>
    <property type="molecule type" value="Genomic_DNA"/>
</dbReference>
<dbReference type="RefSeq" id="WP_011811473.1">
    <property type="nucleotide sequence ID" value="NC_008786.1"/>
</dbReference>
<dbReference type="SMR" id="A1WPC7"/>
<dbReference type="STRING" id="391735.Veis_3772"/>
<dbReference type="GeneID" id="76462143"/>
<dbReference type="KEGG" id="vei:Veis_3772"/>
<dbReference type="eggNOG" id="COG4948">
    <property type="taxonomic scope" value="Bacteria"/>
</dbReference>
<dbReference type="HOGENOM" id="CLU_030273_3_2_4"/>
<dbReference type="OrthoDB" id="103536at2"/>
<dbReference type="UniPathway" id="UPA00081">
    <property type="reaction ID" value="UER00518"/>
</dbReference>
<dbReference type="Proteomes" id="UP000000374">
    <property type="component" value="Chromosome"/>
</dbReference>
<dbReference type="GO" id="GO:0008869">
    <property type="term" value="F:galactonate dehydratase activity"/>
    <property type="evidence" value="ECO:0007669"/>
    <property type="project" value="UniProtKB-UniRule"/>
</dbReference>
<dbReference type="GO" id="GO:0000287">
    <property type="term" value="F:magnesium ion binding"/>
    <property type="evidence" value="ECO:0007669"/>
    <property type="project" value="UniProtKB-UniRule"/>
</dbReference>
<dbReference type="GO" id="GO:0009063">
    <property type="term" value="P:amino acid catabolic process"/>
    <property type="evidence" value="ECO:0007669"/>
    <property type="project" value="InterPro"/>
</dbReference>
<dbReference type="GO" id="GO:0034194">
    <property type="term" value="P:D-galactonate catabolic process"/>
    <property type="evidence" value="ECO:0007669"/>
    <property type="project" value="UniProtKB-UniRule"/>
</dbReference>
<dbReference type="CDD" id="cd03325">
    <property type="entry name" value="D-galactonate_dehydratase"/>
    <property type="match status" value="1"/>
</dbReference>
<dbReference type="FunFam" id="3.30.390.10:FF:000003">
    <property type="entry name" value="D-galactonate dehydratase"/>
    <property type="match status" value="1"/>
</dbReference>
<dbReference type="Gene3D" id="3.20.20.120">
    <property type="entry name" value="Enolase-like C-terminal domain"/>
    <property type="match status" value="1"/>
</dbReference>
<dbReference type="Gene3D" id="3.30.390.10">
    <property type="entry name" value="Enolase-like, N-terminal domain"/>
    <property type="match status" value="1"/>
</dbReference>
<dbReference type="HAMAP" id="MF_01289">
    <property type="entry name" value="Galacton_dehydrat"/>
    <property type="match status" value="1"/>
</dbReference>
<dbReference type="InterPro" id="IPR034593">
    <property type="entry name" value="DgoD-like"/>
</dbReference>
<dbReference type="InterPro" id="IPR036849">
    <property type="entry name" value="Enolase-like_C_sf"/>
</dbReference>
<dbReference type="InterPro" id="IPR029017">
    <property type="entry name" value="Enolase-like_N"/>
</dbReference>
<dbReference type="InterPro" id="IPR029065">
    <property type="entry name" value="Enolase_C-like"/>
</dbReference>
<dbReference type="InterPro" id="IPR023592">
    <property type="entry name" value="Galactonate_deHydtase"/>
</dbReference>
<dbReference type="InterPro" id="IPR018110">
    <property type="entry name" value="Mandel_Rmase/mucon_lact_enz_CS"/>
</dbReference>
<dbReference type="InterPro" id="IPR013342">
    <property type="entry name" value="Mandelate_racemase_C"/>
</dbReference>
<dbReference type="InterPro" id="IPR013341">
    <property type="entry name" value="Mandelate_racemase_N_dom"/>
</dbReference>
<dbReference type="NCBIfam" id="NF010624">
    <property type="entry name" value="PRK14017.1"/>
    <property type="match status" value="1"/>
</dbReference>
<dbReference type="PANTHER" id="PTHR48080:SF2">
    <property type="entry name" value="D-GALACTONATE DEHYDRATASE"/>
    <property type="match status" value="1"/>
</dbReference>
<dbReference type="PANTHER" id="PTHR48080">
    <property type="entry name" value="D-GALACTONATE DEHYDRATASE-RELATED"/>
    <property type="match status" value="1"/>
</dbReference>
<dbReference type="Pfam" id="PF13378">
    <property type="entry name" value="MR_MLE_C"/>
    <property type="match status" value="1"/>
</dbReference>
<dbReference type="Pfam" id="PF02746">
    <property type="entry name" value="MR_MLE_N"/>
    <property type="match status" value="1"/>
</dbReference>
<dbReference type="SFLD" id="SFLDF00003">
    <property type="entry name" value="D-galactonate_dehydratase"/>
    <property type="match status" value="1"/>
</dbReference>
<dbReference type="SFLD" id="SFLDS00001">
    <property type="entry name" value="Enolase"/>
    <property type="match status" value="1"/>
</dbReference>
<dbReference type="SMART" id="SM00922">
    <property type="entry name" value="MR_MLE"/>
    <property type="match status" value="1"/>
</dbReference>
<dbReference type="SUPFAM" id="SSF51604">
    <property type="entry name" value="Enolase C-terminal domain-like"/>
    <property type="match status" value="1"/>
</dbReference>
<dbReference type="SUPFAM" id="SSF54826">
    <property type="entry name" value="Enolase N-terminal domain-like"/>
    <property type="match status" value="1"/>
</dbReference>
<dbReference type="PROSITE" id="PS00908">
    <property type="entry name" value="MR_MLE_1"/>
    <property type="match status" value="1"/>
</dbReference>
<dbReference type="PROSITE" id="PS00909">
    <property type="entry name" value="MR_MLE_2"/>
    <property type="match status" value="1"/>
</dbReference>
<feature type="chain" id="PRO_0000352637" description="D-galactonate dehydratase">
    <location>
        <begin position="1"/>
        <end position="382"/>
    </location>
</feature>
<feature type="active site" description="Proton donor" evidence="1">
    <location>
        <position position="185"/>
    </location>
</feature>
<feature type="active site" description="Proton acceptor" evidence="1">
    <location>
        <position position="285"/>
    </location>
</feature>
<feature type="binding site" evidence="2">
    <location>
        <position position="183"/>
    </location>
    <ligand>
        <name>Mg(2+)</name>
        <dbReference type="ChEBI" id="CHEBI:18420"/>
    </ligand>
</feature>
<feature type="binding site" evidence="2">
    <location>
        <position position="209"/>
    </location>
    <ligand>
        <name>Mg(2+)</name>
        <dbReference type="ChEBI" id="CHEBI:18420"/>
    </ligand>
</feature>
<feature type="binding site" evidence="2">
    <location>
        <position position="235"/>
    </location>
    <ligand>
        <name>Mg(2+)</name>
        <dbReference type="ChEBI" id="CHEBI:18420"/>
    </ligand>
</feature>
<feature type="site" description="Increases basicity of active site His" evidence="2">
    <location>
        <position position="258"/>
    </location>
</feature>
<feature type="site" description="Transition state stabilizer" evidence="2">
    <location>
        <position position="310"/>
    </location>
</feature>
<name>DGOD_VEREI</name>